<comment type="similarity">
    <text evidence="1">Belongs to the UPF0398 family.</text>
</comment>
<evidence type="ECO:0000255" key="1">
    <source>
        <dbReference type="HAMAP-Rule" id="MF_01575"/>
    </source>
</evidence>
<name>Y470_STRMU</name>
<feature type="chain" id="PRO_0000267184" description="UPF0398 protein SMU_470">
    <location>
        <begin position="1"/>
        <end position="173"/>
    </location>
</feature>
<reference key="1">
    <citation type="journal article" date="2002" name="Proc. Natl. Acad. Sci. U.S.A.">
        <title>Genome sequence of Streptococcus mutans UA159, a cariogenic dental pathogen.</title>
        <authorList>
            <person name="Ajdic D.J."/>
            <person name="McShan W.M."/>
            <person name="McLaughlin R.E."/>
            <person name="Savic G."/>
            <person name="Chang J."/>
            <person name="Carson M.B."/>
            <person name="Primeaux C."/>
            <person name="Tian R."/>
            <person name="Kenton S."/>
            <person name="Jia H.G."/>
            <person name="Lin S.P."/>
            <person name="Qian Y."/>
            <person name="Li S."/>
            <person name="Zhu H."/>
            <person name="Najar F.Z."/>
            <person name="Lai H."/>
            <person name="White J."/>
            <person name="Roe B.A."/>
            <person name="Ferretti J.J."/>
        </authorList>
    </citation>
    <scope>NUCLEOTIDE SEQUENCE [LARGE SCALE GENOMIC DNA]</scope>
    <source>
        <strain>ATCC 700610 / UA159</strain>
    </source>
</reference>
<sequence>MTTILVTGYKNFELGIFQDKDPKITIIKKAIKRDFIHFLEEGVDWFVFMGNLGFEYWALEVALSLQTEYDMQLATIFPFENHGEHWSEANQEKLFKFKQTDFVKSSYKRYQNSYQFKKYNQFLLDNTDRAYLFYDKDKETNLKYLYQMMTAKDNYPVSLLTFEDLDDIVQDFD</sequence>
<organism>
    <name type="scientific">Streptococcus mutans serotype c (strain ATCC 700610 / UA159)</name>
    <dbReference type="NCBI Taxonomy" id="210007"/>
    <lineage>
        <taxon>Bacteria</taxon>
        <taxon>Bacillati</taxon>
        <taxon>Bacillota</taxon>
        <taxon>Bacilli</taxon>
        <taxon>Lactobacillales</taxon>
        <taxon>Streptococcaceae</taxon>
        <taxon>Streptococcus</taxon>
    </lineage>
</organism>
<dbReference type="EMBL" id="AE014133">
    <property type="protein sequence ID" value="AAN58218.1"/>
    <property type="molecule type" value="Genomic_DNA"/>
</dbReference>
<dbReference type="RefSeq" id="NP_720912.1">
    <property type="nucleotide sequence ID" value="NC_004350.2"/>
</dbReference>
<dbReference type="RefSeq" id="WP_002263051.1">
    <property type="nucleotide sequence ID" value="NC_004350.2"/>
</dbReference>
<dbReference type="SMR" id="Q8DVL2"/>
<dbReference type="STRING" id="210007.SMU_470"/>
<dbReference type="KEGG" id="smu:SMU_470"/>
<dbReference type="PATRIC" id="fig|210007.7.peg.412"/>
<dbReference type="eggNOG" id="COG4474">
    <property type="taxonomic scope" value="Bacteria"/>
</dbReference>
<dbReference type="HOGENOM" id="CLU_105319_0_0_9"/>
<dbReference type="OrthoDB" id="2301957at2"/>
<dbReference type="PhylomeDB" id="Q8DVL2"/>
<dbReference type="Proteomes" id="UP000002512">
    <property type="component" value="Chromosome"/>
</dbReference>
<dbReference type="Gene3D" id="3.40.50.450">
    <property type="match status" value="1"/>
</dbReference>
<dbReference type="HAMAP" id="MF_01575">
    <property type="entry name" value="UPF0398"/>
    <property type="match status" value="1"/>
</dbReference>
<dbReference type="InterPro" id="IPR010697">
    <property type="entry name" value="YspA"/>
</dbReference>
<dbReference type="NCBIfam" id="NF010181">
    <property type="entry name" value="PRK13660.1"/>
    <property type="match status" value="1"/>
</dbReference>
<dbReference type="PANTHER" id="PTHR38440:SF1">
    <property type="entry name" value="UPF0398 PROTEIN SPR0331"/>
    <property type="match status" value="1"/>
</dbReference>
<dbReference type="PANTHER" id="PTHR38440">
    <property type="entry name" value="UPF0398 PROTEIN YPSA"/>
    <property type="match status" value="1"/>
</dbReference>
<dbReference type="Pfam" id="PF06908">
    <property type="entry name" value="YpsA"/>
    <property type="match status" value="1"/>
</dbReference>
<dbReference type="PIRSF" id="PIRSF021290">
    <property type="entry name" value="DUF1273"/>
    <property type="match status" value="1"/>
</dbReference>
<dbReference type="SUPFAM" id="SSF102405">
    <property type="entry name" value="MCP/YpsA-like"/>
    <property type="match status" value="1"/>
</dbReference>
<keyword id="KW-1185">Reference proteome</keyword>
<proteinExistence type="inferred from homology"/>
<protein>
    <recommendedName>
        <fullName evidence="1">UPF0398 protein SMU_470</fullName>
    </recommendedName>
</protein>
<accession>Q8DVL2</accession>
<gene>
    <name type="ordered locus">SMU_470</name>
</gene>